<sequence length="1222" mass="140274">MLFNINEKGEPLVISFAPFLSPEAIKYLQENERCSDQSQKRTAQQIEAIYTSGQNILVSASAGSGKTFVMVERILDKILRGVSIDRLFISTFTVKAATELRERIENKLYSQIAQTTDFQMKVYLTEQLQSLCQADIGTMDAFAQKVVSRYGYSIGISSQFRIMQDKAEQDVLKQEVFSKLFSEFMNQKEAPVFRALVKNFSGNCKDTSAFRELVYTCYSFSQSTENPKIWLQENFLSAAKTYQRLEDIPDHDIELLLLAMQDTANQLRDVTDMEDYGQLTKAGSRSAKYTKHLTIIEKLSDWVRDFKCLYGKAGLDRLIRDVTGLIPSGNDVTVSKVKYPVFKTLHQKLKQFRHLETILMYQKDCFPLLEQLQDFVLAFSEAYLAVKIQESAFEFSDIAHFAIKILEENTDIRQSYQQHYHEVMVDEYQDNNHMQERLLTLLSNGHNRFMVGDIKQSIYRFRQADPQIFNQKFRDYQKKPEQGKVILLKENFRSQSEVLNVSNAVFSHLMDESVGDVLYDEQHQLIAGSHAQTVPYLDRRAQLLLYNSDKDDGNAPSDSEGISFSEVTIVAKEIIKLHNDKGVPFEDITLLVSSRTRNDIISHTFNQYGIPIVTDGGQQNYLKSVEVMVMLDTLRTINNPRNDYALVALLRSPMFAFDEDDLARIALQKDNELDKDCLYDKIQRAVIGRGAHPELIHDTLLGKLNVFLKTLKSWRRYAKLGSLYDLIWKIFNDRFYFDFVASQAKAEQAQANLYALALRANQFEKSGYKGLYRFIKMIDKVLETQNDLADVEVAAPKQAVNLMTIHKSKGLQFPYVFILNCDKRFSMTDIHKSFILNRQHGIGIKYLADIKGLLGETTLNSVKVSMETLPYQLNKQELRLATLSEQMRLLYVAMTRAEKKVYFIGKASKSKSQEITDPKKLGKLLPLALREQLLTFQDWLLAIADIFSTEDLYFDVRFIEDSDLTQESVGRLQTPQLLNPDDLKDNRQSETIARALDMLEAVSQLNANYEAAIHLPTVRTPSQLKATYEPLLEPIGVDIIEKSSRSLSDFTLPHFSKKAKVEASHIGSALHQLMQVLPLSKPINQQTLLDALRGIDSNEEVKTALDLKKIESFFCDTSLGQFFQTYQKHLYREAPFAILKLDPISQEEYVLRGIIDAYFLFDDHIVLVDYKTDKYKQPIELKKRYQQQLELYAEALTQTYKLPVTKRYLVLMGGGKPEIVEV</sequence>
<proteinExistence type="inferred from homology"/>
<gene>
    <name evidence="1" type="primary">addA</name>
    <name type="ordered locus">M6_Spy0612</name>
</gene>
<evidence type="ECO:0000255" key="1">
    <source>
        <dbReference type="HAMAP-Rule" id="MF_01451"/>
    </source>
</evidence>
<reference key="1">
    <citation type="journal article" date="2004" name="J. Infect. Dis.">
        <title>Progress toward characterization of the group A Streptococcus metagenome: complete genome sequence of a macrolide-resistant serotype M6 strain.</title>
        <authorList>
            <person name="Banks D.J."/>
            <person name="Porcella S.F."/>
            <person name="Barbian K.D."/>
            <person name="Beres S.B."/>
            <person name="Philips L.E."/>
            <person name="Voyich J.M."/>
            <person name="DeLeo F.R."/>
            <person name="Martin J.M."/>
            <person name="Somerville G.A."/>
            <person name="Musser J.M."/>
        </authorList>
    </citation>
    <scope>NUCLEOTIDE SEQUENCE [LARGE SCALE GENOMIC DNA]</scope>
    <source>
        <strain>ATCC BAA-946 / MGAS10394</strain>
    </source>
</reference>
<comment type="function">
    <text evidence="1">The heterodimer acts as both an ATP-dependent DNA helicase and an ATP-dependent, dual-direction single-stranded exonuclease. Recognizes the chi site generating a DNA molecule suitable for the initiation of homologous recombination. The AddA nuclease domain is required for chi fragment generation; this subunit has the helicase and 3' -&gt; 5' nuclease activities.</text>
</comment>
<comment type="catalytic activity">
    <reaction evidence="1">
        <text>Couples ATP hydrolysis with the unwinding of duplex DNA by translocating in the 3'-5' direction.</text>
        <dbReference type="EC" id="5.6.2.4"/>
    </reaction>
</comment>
<comment type="catalytic activity">
    <reaction evidence="1">
        <text>ATP + H2O = ADP + phosphate + H(+)</text>
        <dbReference type="Rhea" id="RHEA:13065"/>
        <dbReference type="ChEBI" id="CHEBI:15377"/>
        <dbReference type="ChEBI" id="CHEBI:15378"/>
        <dbReference type="ChEBI" id="CHEBI:30616"/>
        <dbReference type="ChEBI" id="CHEBI:43474"/>
        <dbReference type="ChEBI" id="CHEBI:456216"/>
        <dbReference type="EC" id="5.6.2.4"/>
    </reaction>
</comment>
<comment type="cofactor">
    <cofactor evidence="1">
        <name>Mg(2+)</name>
        <dbReference type="ChEBI" id="CHEBI:18420"/>
    </cofactor>
</comment>
<comment type="subunit">
    <text evidence="1">Heterodimer of AddA and AddB/RexB.</text>
</comment>
<comment type="similarity">
    <text evidence="1">Belongs to the helicase family. AddA subfamily.</text>
</comment>
<accession>Q5XCW6</accession>
<organism>
    <name type="scientific">Streptococcus pyogenes serotype M6 (strain ATCC BAA-946 / MGAS10394)</name>
    <dbReference type="NCBI Taxonomy" id="286636"/>
    <lineage>
        <taxon>Bacteria</taxon>
        <taxon>Bacillati</taxon>
        <taxon>Bacillota</taxon>
        <taxon>Bacilli</taxon>
        <taxon>Lactobacillales</taxon>
        <taxon>Streptococcaceae</taxon>
        <taxon>Streptococcus</taxon>
    </lineage>
</organism>
<protein>
    <recommendedName>
        <fullName evidence="1">ATP-dependent helicase/nuclease subunit A</fullName>
        <ecNumber evidence="1">3.1.-.-</ecNumber>
        <ecNumber evidence="1">5.6.2.4</ecNumber>
    </recommendedName>
    <alternativeName>
        <fullName evidence="1">ATP-dependent helicase/nuclease AddA</fullName>
    </alternativeName>
    <alternativeName>
        <fullName evidence="1">DNA 3'-5' helicase AddA</fullName>
    </alternativeName>
</protein>
<dbReference type="EC" id="3.1.-.-" evidence="1"/>
<dbReference type="EC" id="5.6.2.4" evidence="1"/>
<dbReference type="EMBL" id="CP000003">
    <property type="protein sequence ID" value="AAT86747.1"/>
    <property type="molecule type" value="Genomic_DNA"/>
</dbReference>
<dbReference type="SMR" id="Q5XCW6"/>
<dbReference type="KEGG" id="spa:M6_Spy0612"/>
<dbReference type="HOGENOM" id="CLU_001114_3_1_9"/>
<dbReference type="Proteomes" id="UP000001167">
    <property type="component" value="Chromosome"/>
</dbReference>
<dbReference type="GO" id="GO:0005829">
    <property type="term" value="C:cytosol"/>
    <property type="evidence" value="ECO:0007669"/>
    <property type="project" value="TreeGrafter"/>
</dbReference>
<dbReference type="GO" id="GO:0033202">
    <property type="term" value="C:DNA helicase complex"/>
    <property type="evidence" value="ECO:0007669"/>
    <property type="project" value="TreeGrafter"/>
</dbReference>
<dbReference type="GO" id="GO:0043138">
    <property type="term" value="F:3'-5' DNA helicase activity"/>
    <property type="evidence" value="ECO:0007669"/>
    <property type="project" value="UniProtKB-UniRule"/>
</dbReference>
<dbReference type="GO" id="GO:0008408">
    <property type="term" value="F:3'-5' exonuclease activity"/>
    <property type="evidence" value="ECO:0007669"/>
    <property type="project" value="UniProtKB-UniRule"/>
</dbReference>
<dbReference type="GO" id="GO:0005524">
    <property type="term" value="F:ATP binding"/>
    <property type="evidence" value="ECO:0007669"/>
    <property type="project" value="UniProtKB-UniRule"/>
</dbReference>
<dbReference type="GO" id="GO:0016887">
    <property type="term" value="F:ATP hydrolysis activity"/>
    <property type="evidence" value="ECO:0007669"/>
    <property type="project" value="RHEA"/>
</dbReference>
<dbReference type="GO" id="GO:0003690">
    <property type="term" value="F:double-stranded DNA binding"/>
    <property type="evidence" value="ECO:0007669"/>
    <property type="project" value="UniProtKB-UniRule"/>
</dbReference>
<dbReference type="GO" id="GO:0000724">
    <property type="term" value="P:double-strand break repair via homologous recombination"/>
    <property type="evidence" value="ECO:0007669"/>
    <property type="project" value="UniProtKB-UniRule"/>
</dbReference>
<dbReference type="CDD" id="cd17932">
    <property type="entry name" value="DEXQc_UvrD"/>
    <property type="match status" value="1"/>
</dbReference>
<dbReference type="Gene3D" id="3.90.320.10">
    <property type="match status" value="1"/>
</dbReference>
<dbReference type="Gene3D" id="3.40.50.300">
    <property type="entry name" value="P-loop containing nucleotide triphosphate hydrolases"/>
    <property type="match status" value="4"/>
</dbReference>
<dbReference type="Gene3D" id="1.10.486.10">
    <property type="entry name" value="PCRA, domain 4"/>
    <property type="match status" value="1"/>
</dbReference>
<dbReference type="HAMAP" id="MF_01451">
    <property type="entry name" value="AddA"/>
    <property type="match status" value="1"/>
</dbReference>
<dbReference type="InterPro" id="IPR014152">
    <property type="entry name" value="AddA"/>
</dbReference>
<dbReference type="InterPro" id="IPR014017">
    <property type="entry name" value="DNA_helicase_UvrD-like_C"/>
</dbReference>
<dbReference type="InterPro" id="IPR000212">
    <property type="entry name" value="DNA_helicase_UvrD/REP"/>
</dbReference>
<dbReference type="InterPro" id="IPR027417">
    <property type="entry name" value="P-loop_NTPase"/>
</dbReference>
<dbReference type="InterPro" id="IPR011604">
    <property type="entry name" value="PDDEXK-like_dom_sf"/>
</dbReference>
<dbReference type="InterPro" id="IPR038726">
    <property type="entry name" value="PDDEXK_AddAB-type"/>
</dbReference>
<dbReference type="InterPro" id="IPR011335">
    <property type="entry name" value="Restrct_endonuc-II-like"/>
</dbReference>
<dbReference type="InterPro" id="IPR014016">
    <property type="entry name" value="UvrD-like_ATP-bd"/>
</dbReference>
<dbReference type="NCBIfam" id="TIGR02785">
    <property type="entry name" value="addA_Gpos"/>
    <property type="match status" value="1"/>
</dbReference>
<dbReference type="PANTHER" id="PTHR11070:SF48">
    <property type="entry name" value="ATP-DEPENDENT HELICASE_NUCLEASE SUBUNIT A"/>
    <property type="match status" value="1"/>
</dbReference>
<dbReference type="PANTHER" id="PTHR11070">
    <property type="entry name" value="UVRD / RECB / PCRA DNA HELICASE FAMILY MEMBER"/>
    <property type="match status" value="1"/>
</dbReference>
<dbReference type="Pfam" id="PF12705">
    <property type="entry name" value="PDDEXK_1"/>
    <property type="match status" value="1"/>
</dbReference>
<dbReference type="Pfam" id="PF00580">
    <property type="entry name" value="UvrD-helicase"/>
    <property type="match status" value="1"/>
</dbReference>
<dbReference type="Pfam" id="PF13361">
    <property type="entry name" value="UvrD_C"/>
    <property type="match status" value="1"/>
</dbReference>
<dbReference type="SUPFAM" id="SSF52540">
    <property type="entry name" value="P-loop containing nucleoside triphosphate hydrolases"/>
    <property type="match status" value="1"/>
</dbReference>
<dbReference type="SUPFAM" id="SSF52980">
    <property type="entry name" value="Restriction endonuclease-like"/>
    <property type="match status" value="1"/>
</dbReference>
<dbReference type="PROSITE" id="PS51198">
    <property type="entry name" value="UVRD_HELICASE_ATP_BIND"/>
    <property type="match status" value="1"/>
</dbReference>
<dbReference type="PROSITE" id="PS51217">
    <property type="entry name" value="UVRD_HELICASE_CTER"/>
    <property type="match status" value="1"/>
</dbReference>
<keyword id="KW-0067">ATP-binding</keyword>
<keyword id="KW-0227">DNA damage</keyword>
<keyword id="KW-0234">DNA repair</keyword>
<keyword id="KW-0238">DNA-binding</keyword>
<keyword id="KW-0269">Exonuclease</keyword>
<keyword id="KW-0347">Helicase</keyword>
<keyword id="KW-0378">Hydrolase</keyword>
<keyword id="KW-0413">Isomerase</keyword>
<keyword id="KW-0540">Nuclease</keyword>
<keyword id="KW-0547">Nucleotide-binding</keyword>
<name>ADDA_STRP6</name>
<feature type="chain" id="PRO_0000379350" description="ATP-dependent helicase/nuclease subunit A">
    <location>
        <begin position="1"/>
        <end position="1222"/>
    </location>
</feature>
<feature type="domain" description="UvrD-like helicase ATP-binding" evidence="1">
    <location>
        <begin position="39"/>
        <end position="495"/>
    </location>
</feature>
<feature type="domain" description="UvrD-like helicase C-terminal" evidence="1">
    <location>
        <begin position="524"/>
        <end position="810"/>
    </location>
</feature>
<feature type="binding site" evidence="1">
    <location>
        <begin position="60"/>
        <end position="67"/>
    </location>
    <ligand>
        <name>ATP</name>
        <dbReference type="ChEBI" id="CHEBI:30616"/>
    </ligand>
</feature>